<comment type="function">
    <text evidence="1">Produces ATP from ADP in the presence of a proton gradient across the membrane. The V-type beta chain is a regulatory subunit.</text>
</comment>
<comment type="similarity">
    <text evidence="1">Belongs to the ATPase alpha/beta chains family.</text>
</comment>
<accession>Q662R9</accession>
<gene>
    <name evidence="1" type="primary">atpB</name>
    <name type="ordered locus">BG0094</name>
</gene>
<organism>
    <name type="scientific">Borrelia garinii subsp. bavariensis (strain ATCC BAA-2496 / DSM 23469 / PBi)</name>
    <name type="common">Borreliella bavariensis</name>
    <dbReference type="NCBI Taxonomy" id="290434"/>
    <lineage>
        <taxon>Bacteria</taxon>
        <taxon>Pseudomonadati</taxon>
        <taxon>Spirochaetota</taxon>
        <taxon>Spirochaetia</taxon>
        <taxon>Spirochaetales</taxon>
        <taxon>Borreliaceae</taxon>
        <taxon>Borreliella</taxon>
    </lineage>
</organism>
<protein>
    <recommendedName>
        <fullName evidence="1">V-type ATP synthase beta chain</fullName>
    </recommendedName>
    <alternativeName>
        <fullName evidence="1">V-ATPase subunit B</fullName>
    </alternativeName>
</protein>
<evidence type="ECO:0000255" key="1">
    <source>
        <dbReference type="HAMAP-Rule" id="MF_00310"/>
    </source>
</evidence>
<keyword id="KW-0066">ATP synthesis</keyword>
<keyword id="KW-0375">Hydrogen ion transport</keyword>
<keyword id="KW-0406">Ion transport</keyword>
<keyword id="KW-0813">Transport</keyword>
<proteinExistence type="inferred from homology"/>
<reference key="1">
    <citation type="journal article" date="2004" name="Nucleic Acids Res.">
        <title>Comparative analysis of the Borrelia garinii genome.</title>
        <authorList>
            <person name="Gloeckner G."/>
            <person name="Lehmann R."/>
            <person name="Romualdi A."/>
            <person name="Pradella S."/>
            <person name="Schulte-Spechtel U."/>
            <person name="Schilhabel M."/>
            <person name="Wilske B."/>
            <person name="Suehnel J."/>
            <person name="Platzer M."/>
        </authorList>
    </citation>
    <scope>NUCLEOTIDE SEQUENCE [LARGE SCALE GENOMIC DNA]</scope>
    <source>
        <strain>ATCC BAA-2496 / DSM 23469 / PBi</strain>
    </source>
</reference>
<feature type="chain" id="PRO_1000059366" description="V-type ATP synthase beta chain">
    <location>
        <begin position="1"/>
        <end position="434"/>
    </location>
</feature>
<sequence length="434" mass="47994">MKRVYSKIECIAGNVITVTAQGIKYGELAIVKAKDTSSLAEVIKLDREKVSLQVYGGTRGISTSDEIKFLGHSMQVSFSDNLLGRIFDGSGNPRDGGPSLDDNLIEIGGPSANPAKRIVPRNMIRTGLPMIDVFNTLVESQKLPIFSVSGEPYNELLLRIALQAEVDLIILGGMGLKHDDYLTFKDSLEKGGALSRTIFFVHTANDSVVESLTVPDISLSVAEKFALKGKKVLVLLTDMTNFADAMKEISITMEQVPSNRGYPGDLYSQLAYRYEKAIDFEGAGSITILTVTTMPGDDVTHPVPDNTGYITEGQYYLKGGRIEPFGSLSRLKQMVNGRTRDDHRTIMDSMIKLYASSKDSVEKKAMGFNMTKWDEKLLKYSNMFESKMMDLSVNIPLEEALDLGWDILASCFSPKETGIKTDLIEKYWPKKETS</sequence>
<dbReference type="EMBL" id="CP000013">
    <property type="protein sequence ID" value="AAU06952.1"/>
    <property type="molecule type" value="Genomic_DNA"/>
</dbReference>
<dbReference type="RefSeq" id="WP_011193446.1">
    <property type="nucleotide sequence ID" value="NZ_CP028872.1"/>
</dbReference>
<dbReference type="SMR" id="Q662R9"/>
<dbReference type="GeneID" id="45160889"/>
<dbReference type="KEGG" id="bga:BG0094"/>
<dbReference type="eggNOG" id="COG1156">
    <property type="taxonomic scope" value="Bacteria"/>
</dbReference>
<dbReference type="HOGENOM" id="CLU_022916_2_0_12"/>
<dbReference type="OrthoDB" id="9802718at2"/>
<dbReference type="Proteomes" id="UP000002276">
    <property type="component" value="Chromosome"/>
</dbReference>
<dbReference type="GO" id="GO:0005524">
    <property type="term" value="F:ATP binding"/>
    <property type="evidence" value="ECO:0007669"/>
    <property type="project" value="UniProtKB-UniRule"/>
</dbReference>
<dbReference type="GO" id="GO:0046933">
    <property type="term" value="F:proton-transporting ATP synthase activity, rotational mechanism"/>
    <property type="evidence" value="ECO:0007669"/>
    <property type="project" value="UniProtKB-UniRule"/>
</dbReference>
<dbReference type="GO" id="GO:0042777">
    <property type="term" value="P:proton motive force-driven plasma membrane ATP synthesis"/>
    <property type="evidence" value="ECO:0007669"/>
    <property type="project" value="UniProtKB-UniRule"/>
</dbReference>
<dbReference type="CDD" id="cd01135">
    <property type="entry name" value="V_A-ATPase_B"/>
    <property type="match status" value="1"/>
</dbReference>
<dbReference type="Gene3D" id="3.40.50.12240">
    <property type="match status" value="1"/>
</dbReference>
<dbReference type="HAMAP" id="MF_00310">
    <property type="entry name" value="ATP_synth_B_arch"/>
    <property type="match status" value="1"/>
</dbReference>
<dbReference type="InterPro" id="IPR055190">
    <property type="entry name" value="ATP-synt_VA_C"/>
</dbReference>
<dbReference type="InterPro" id="IPR004100">
    <property type="entry name" value="ATPase_F1/V1/A1_a/bsu_N"/>
</dbReference>
<dbReference type="InterPro" id="IPR000194">
    <property type="entry name" value="ATPase_F1/V1/A1_a/bsu_nucl-bd"/>
</dbReference>
<dbReference type="InterPro" id="IPR027417">
    <property type="entry name" value="P-loop_NTPase"/>
</dbReference>
<dbReference type="InterPro" id="IPR022879">
    <property type="entry name" value="V-ATPase_su_B/beta"/>
</dbReference>
<dbReference type="NCBIfam" id="NF002555">
    <property type="entry name" value="PRK02118.1"/>
    <property type="match status" value="1"/>
</dbReference>
<dbReference type="NCBIfam" id="NF003235">
    <property type="entry name" value="PRK04196.1"/>
    <property type="match status" value="1"/>
</dbReference>
<dbReference type="PANTHER" id="PTHR43389">
    <property type="entry name" value="V-TYPE PROTON ATPASE SUBUNIT B"/>
    <property type="match status" value="1"/>
</dbReference>
<dbReference type="PANTHER" id="PTHR43389:SF4">
    <property type="entry name" value="V-TYPE PROTON ATPASE SUBUNIT B"/>
    <property type="match status" value="1"/>
</dbReference>
<dbReference type="Pfam" id="PF00006">
    <property type="entry name" value="ATP-synt_ab"/>
    <property type="match status" value="1"/>
</dbReference>
<dbReference type="Pfam" id="PF02874">
    <property type="entry name" value="ATP-synt_ab_N"/>
    <property type="match status" value="1"/>
</dbReference>
<dbReference type="Pfam" id="PF22919">
    <property type="entry name" value="ATP-synt_VA_C"/>
    <property type="match status" value="1"/>
</dbReference>
<dbReference type="SUPFAM" id="SSF52540">
    <property type="entry name" value="P-loop containing nucleoside triphosphate hydrolases"/>
    <property type="match status" value="1"/>
</dbReference>
<name>VATB_BORGP</name>